<sequence length="695" mass="76783">MAQLDTLDIVVLVVLLVGSVAYFTKGSYWAVPKDPYAAANSAMNGAAKTGKTRDIIQKMEETGKNCVIFYGSQTGTAEDYASRLAKEGSQRFGLKTMVADLEDYDYENLDKFPEDKIAFFVLATYGEGEPTDNAVEFYQFITGEDVAFESGASAEEKPLSSLKYVAFGLGNNTYEHYNAMVRHVDAALTKLGAQRIGTAGEGDDGAGTMEEDFLAWKEPMWAALSESMNLQEREAVYEPVFSVIEDESLSPEDDSVYLGEPTQGHLSGSPKGPYSAHNPYIAPIVESRELFTAKDRNCLHMEIGIAGSNLTYQTGDHIAIWPTNAGVEVDRFLEVFGIEKKRHTVINIKGLDVTAKVPIPTPTTYDAAVRFYMEICAPVSRQFVSSLVPFAPDEESKAEIVRLGNDKDYFHEKISNQCFNIAQALQNITSKPFSAVPFSLLIEGLNRLQPRYYSISSSSLVQKDKISITAVVESVRLPGASHIVKGVTTNYLLALKQKQNGDPSPDPHGLTYAITGPRNKYDGIHVPVHVRHSNFKLPSDPSKPIIMVGPGTGVAPFRGFIQERAALAESGKDVGPTILFFGCRNRNEDFLYKEEWKVYQEKLGDKLKIITAFSRETAKKVYVQHRLQEHADLVSDLLKQKATFYVCGDAANMAREVNLVLGQIIAKSRGLPAEKGEEMVKHMRSSGSYQEDVWS</sequence>
<proteinExistence type="evidence at protein level"/>
<gene>
    <name evidence="1" type="primary">cprA</name>
    <name type="ORF">AFUA_6G10990</name>
</gene>
<organism>
    <name type="scientific">Aspergillus fumigatus (strain ATCC MYA-4609 / CBS 101355 / FGSC A1100 / Af293)</name>
    <name type="common">Neosartorya fumigata</name>
    <dbReference type="NCBI Taxonomy" id="330879"/>
    <lineage>
        <taxon>Eukaryota</taxon>
        <taxon>Fungi</taxon>
        <taxon>Dikarya</taxon>
        <taxon>Ascomycota</taxon>
        <taxon>Pezizomycotina</taxon>
        <taxon>Eurotiomycetes</taxon>
        <taxon>Eurotiomycetidae</taxon>
        <taxon>Eurotiales</taxon>
        <taxon>Aspergillaceae</taxon>
        <taxon>Aspergillus</taxon>
        <taxon>Aspergillus subgen. Fumigati</taxon>
    </lineage>
</organism>
<keyword id="KW-1003">Cell membrane</keyword>
<keyword id="KW-0256">Endoplasmic reticulum</keyword>
<keyword id="KW-0274">FAD</keyword>
<keyword id="KW-0285">Flavoprotein</keyword>
<keyword id="KW-0288">FMN</keyword>
<keyword id="KW-0444">Lipid biosynthesis</keyword>
<keyword id="KW-0443">Lipid metabolism</keyword>
<keyword id="KW-0472">Membrane</keyword>
<keyword id="KW-0496">Mitochondrion</keyword>
<keyword id="KW-1000">Mitochondrion outer membrane</keyword>
<keyword id="KW-0521">NADP</keyword>
<keyword id="KW-0560">Oxidoreductase</keyword>
<keyword id="KW-1185">Reference proteome</keyword>
<keyword id="KW-0752">Steroid biosynthesis</keyword>
<keyword id="KW-0753">Steroid metabolism</keyword>
<keyword id="KW-0756">Sterol biosynthesis</keyword>
<keyword id="KW-1207">Sterol metabolism</keyword>
<keyword id="KW-0812">Transmembrane</keyword>
<keyword id="KW-1133">Transmembrane helix</keyword>
<accession>Q4WM67</accession>
<evidence type="ECO:0000255" key="1">
    <source>
        <dbReference type="HAMAP-Rule" id="MF_03212"/>
    </source>
</evidence>
<evidence type="ECO:0000269" key="2">
    <source>
    </source>
</evidence>
<evidence type="ECO:0000305" key="3"/>
<evidence type="ECO:0000312" key="4">
    <source>
        <dbReference type="EMBL" id="EAL88947.1"/>
    </source>
</evidence>
<protein>
    <recommendedName>
        <fullName evidence="1">NADPH--cytochrome P450 reductase</fullName>
        <shortName evidence="1">CPR</shortName>
        <shortName evidence="1">P450R</shortName>
        <ecNumber evidence="1">1.6.2.4</ecNumber>
    </recommendedName>
</protein>
<dbReference type="EC" id="1.6.2.4" evidence="1"/>
<dbReference type="EMBL" id="AAHF01000006">
    <property type="protein sequence ID" value="EAL88947.1"/>
    <property type="molecule type" value="Genomic_DNA"/>
</dbReference>
<dbReference type="RefSeq" id="XP_750985.1">
    <property type="nucleotide sequence ID" value="XM_745892.1"/>
</dbReference>
<dbReference type="SMR" id="Q4WM67"/>
<dbReference type="FunCoup" id="Q4WM67">
    <property type="interactions" value="830"/>
</dbReference>
<dbReference type="STRING" id="330879.Q4WM67"/>
<dbReference type="EnsemblFungi" id="EAL88947">
    <property type="protein sequence ID" value="EAL88947"/>
    <property type="gene ID" value="AFUA_6G10990"/>
</dbReference>
<dbReference type="GeneID" id="3508290"/>
<dbReference type="KEGG" id="afm:AFUA_6G10990"/>
<dbReference type="VEuPathDB" id="FungiDB:Afu6g10990"/>
<dbReference type="eggNOG" id="KOG1158">
    <property type="taxonomic scope" value="Eukaryota"/>
</dbReference>
<dbReference type="HOGENOM" id="CLU_001570_17_3_1"/>
<dbReference type="InParanoid" id="Q4WM67"/>
<dbReference type="OMA" id="QKRYQRD"/>
<dbReference type="OrthoDB" id="1856718at2759"/>
<dbReference type="Proteomes" id="UP000002530">
    <property type="component" value="Chromosome 6"/>
</dbReference>
<dbReference type="GO" id="GO:0005829">
    <property type="term" value="C:cytosol"/>
    <property type="evidence" value="ECO:0000318"/>
    <property type="project" value="GO_Central"/>
</dbReference>
<dbReference type="GO" id="GO:0005789">
    <property type="term" value="C:endoplasmic reticulum membrane"/>
    <property type="evidence" value="ECO:0007669"/>
    <property type="project" value="UniProtKB-SubCell"/>
</dbReference>
<dbReference type="GO" id="GO:0005741">
    <property type="term" value="C:mitochondrial outer membrane"/>
    <property type="evidence" value="ECO:0007669"/>
    <property type="project" value="UniProtKB-SubCell"/>
</dbReference>
<dbReference type="GO" id="GO:0005886">
    <property type="term" value="C:plasma membrane"/>
    <property type="evidence" value="ECO:0007669"/>
    <property type="project" value="UniProtKB-SubCell"/>
</dbReference>
<dbReference type="GO" id="GO:0050660">
    <property type="term" value="F:flavin adenine dinucleotide binding"/>
    <property type="evidence" value="ECO:0000318"/>
    <property type="project" value="GO_Central"/>
</dbReference>
<dbReference type="GO" id="GO:0010181">
    <property type="term" value="F:FMN binding"/>
    <property type="evidence" value="ECO:0000318"/>
    <property type="project" value="GO_Central"/>
</dbReference>
<dbReference type="GO" id="GO:0050661">
    <property type="term" value="F:NADP binding"/>
    <property type="evidence" value="ECO:0007669"/>
    <property type="project" value="UniProtKB-UniRule"/>
</dbReference>
<dbReference type="GO" id="GO:0003958">
    <property type="term" value="F:NADPH-hemoprotein reductase activity"/>
    <property type="evidence" value="ECO:0000318"/>
    <property type="project" value="GO_Central"/>
</dbReference>
<dbReference type="GO" id="GO:0006696">
    <property type="term" value="P:ergosterol biosynthetic process"/>
    <property type="evidence" value="ECO:0007669"/>
    <property type="project" value="UniProtKB-UniRule"/>
</dbReference>
<dbReference type="CDD" id="cd06204">
    <property type="entry name" value="CYPOR"/>
    <property type="match status" value="1"/>
</dbReference>
<dbReference type="FunFam" id="1.20.990.10:FF:000009">
    <property type="entry name" value="NADPH--cytochrome P450 reductase"/>
    <property type="match status" value="1"/>
</dbReference>
<dbReference type="FunFam" id="2.40.30.10:FF:000100">
    <property type="entry name" value="NADPH--cytochrome P450 reductase"/>
    <property type="match status" value="1"/>
</dbReference>
<dbReference type="FunFam" id="2.40.30.10:FF:000111">
    <property type="entry name" value="NADPH--cytochrome P450 reductase"/>
    <property type="match status" value="1"/>
</dbReference>
<dbReference type="FunFam" id="3.40.50.360:FF:000024">
    <property type="entry name" value="NADPH--cytochrome P450 reductase"/>
    <property type="match status" value="1"/>
</dbReference>
<dbReference type="FunFam" id="3.40.50.80:FF:000018">
    <property type="entry name" value="NADPH--cytochrome P450 reductase"/>
    <property type="match status" value="1"/>
</dbReference>
<dbReference type="Gene3D" id="3.40.50.360">
    <property type="match status" value="1"/>
</dbReference>
<dbReference type="Gene3D" id="1.20.990.10">
    <property type="entry name" value="NADPH-cytochrome p450 Reductase, Chain A, domain 3"/>
    <property type="match status" value="1"/>
</dbReference>
<dbReference type="Gene3D" id="3.40.50.80">
    <property type="entry name" value="Nucleotide-binding domain of ferredoxin-NADP reductase (FNR) module"/>
    <property type="match status" value="1"/>
</dbReference>
<dbReference type="Gene3D" id="2.40.30.10">
    <property type="entry name" value="Translation factors"/>
    <property type="match status" value="1"/>
</dbReference>
<dbReference type="HAMAP" id="MF_03212">
    <property type="entry name" value="NCPR"/>
    <property type="match status" value="1"/>
</dbReference>
<dbReference type="InterPro" id="IPR003097">
    <property type="entry name" value="CysJ-like_FAD-binding"/>
</dbReference>
<dbReference type="InterPro" id="IPR017927">
    <property type="entry name" value="FAD-bd_FR_type"/>
</dbReference>
<dbReference type="InterPro" id="IPR001094">
    <property type="entry name" value="Flavdoxin-like"/>
</dbReference>
<dbReference type="InterPro" id="IPR008254">
    <property type="entry name" value="Flavodoxin/NO_synth"/>
</dbReference>
<dbReference type="InterPro" id="IPR001709">
    <property type="entry name" value="Flavoprot_Pyr_Nucl_cyt_Rdtase"/>
</dbReference>
<dbReference type="InterPro" id="IPR029039">
    <property type="entry name" value="Flavoprotein-like_sf"/>
</dbReference>
<dbReference type="InterPro" id="IPR039261">
    <property type="entry name" value="FNR_nucleotide-bd"/>
</dbReference>
<dbReference type="InterPro" id="IPR023173">
    <property type="entry name" value="NADPH_Cyt_P450_Rdtase_alpha"/>
</dbReference>
<dbReference type="InterPro" id="IPR001433">
    <property type="entry name" value="OxRdtase_FAD/NAD-bd"/>
</dbReference>
<dbReference type="InterPro" id="IPR023208">
    <property type="entry name" value="P450R"/>
</dbReference>
<dbReference type="InterPro" id="IPR017938">
    <property type="entry name" value="Riboflavin_synthase-like_b-brl"/>
</dbReference>
<dbReference type="PANTHER" id="PTHR19384:SF17">
    <property type="entry name" value="NADPH--CYTOCHROME P450 REDUCTASE"/>
    <property type="match status" value="1"/>
</dbReference>
<dbReference type="PANTHER" id="PTHR19384">
    <property type="entry name" value="NITRIC OXIDE SYNTHASE-RELATED"/>
    <property type="match status" value="1"/>
</dbReference>
<dbReference type="Pfam" id="PF00667">
    <property type="entry name" value="FAD_binding_1"/>
    <property type="match status" value="1"/>
</dbReference>
<dbReference type="Pfam" id="PF00258">
    <property type="entry name" value="Flavodoxin_1"/>
    <property type="match status" value="1"/>
</dbReference>
<dbReference type="Pfam" id="PF00175">
    <property type="entry name" value="NAD_binding_1"/>
    <property type="match status" value="1"/>
</dbReference>
<dbReference type="PIRSF" id="PIRSF000208">
    <property type="entry name" value="P450R"/>
    <property type="match status" value="1"/>
</dbReference>
<dbReference type="PRINTS" id="PR00369">
    <property type="entry name" value="FLAVODOXIN"/>
</dbReference>
<dbReference type="PRINTS" id="PR00371">
    <property type="entry name" value="FPNCR"/>
</dbReference>
<dbReference type="SUPFAM" id="SSF52343">
    <property type="entry name" value="Ferredoxin reductase-like, C-terminal NADP-linked domain"/>
    <property type="match status" value="1"/>
</dbReference>
<dbReference type="SUPFAM" id="SSF52218">
    <property type="entry name" value="Flavoproteins"/>
    <property type="match status" value="1"/>
</dbReference>
<dbReference type="SUPFAM" id="SSF63380">
    <property type="entry name" value="Riboflavin synthase domain-like"/>
    <property type="match status" value="1"/>
</dbReference>
<dbReference type="PROSITE" id="PS51384">
    <property type="entry name" value="FAD_FR"/>
    <property type="match status" value="1"/>
</dbReference>
<dbReference type="PROSITE" id="PS50902">
    <property type="entry name" value="FLAVODOXIN_LIKE"/>
    <property type="match status" value="1"/>
</dbReference>
<reference evidence="4" key="1">
    <citation type="journal article" date="2005" name="Nature">
        <title>Genomic sequence of the pathogenic and allergenic filamentous fungus Aspergillus fumigatus.</title>
        <authorList>
            <person name="Nierman W.C."/>
            <person name="Pain A."/>
            <person name="Anderson M.J."/>
            <person name="Wortman J.R."/>
            <person name="Kim H.S."/>
            <person name="Arroyo J."/>
            <person name="Berriman M."/>
            <person name="Abe K."/>
            <person name="Archer D.B."/>
            <person name="Bermejo C."/>
            <person name="Bennett J.W."/>
            <person name="Bowyer P."/>
            <person name="Chen D."/>
            <person name="Collins M."/>
            <person name="Coulsen R."/>
            <person name="Davies R."/>
            <person name="Dyer P.S."/>
            <person name="Farman M.L."/>
            <person name="Fedorova N."/>
            <person name="Fedorova N.D."/>
            <person name="Feldblyum T.V."/>
            <person name="Fischer R."/>
            <person name="Fosker N."/>
            <person name="Fraser A."/>
            <person name="Garcia J.L."/>
            <person name="Garcia M.J."/>
            <person name="Goble A."/>
            <person name="Goldman G.H."/>
            <person name="Gomi K."/>
            <person name="Griffith-Jones S."/>
            <person name="Gwilliam R."/>
            <person name="Haas B.J."/>
            <person name="Haas H."/>
            <person name="Harris D.E."/>
            <person name="Horiuchi H."/>
            <person name="Huang J."/>
            <person name="Humphray S."/>
            <person name="Jimenez J."/>
            <person name="Keller N."/>
            <person name="Khouri H."/>
            <person name="Kitamoto K."/>
            <person name="Kobayashi T."/>
            <person name="Konzack S."/>
            <person name="Kulkarni R."/>
            <person name="Kumagai T."/>
            <person name="Lafton A."/>
            <person name="Latge J.-P."/>
            <person name="Li W."/>
            <person name="Lord A."/>
            <person name="Lu C."/>
            <person name="Majoros W.H."/>
            <person name="May G.S."/>
            <person name="Miller B.L."/>
            <person name="Mohamoud Y."/>
            <person name="Molina M."/>
            <person name="Monod M."/>
            <person name="Mouyna I."/>
            <person name="Mulligan S."/>
            <person name="Murphy L.D."/>
            <person name="O'Neil S."/>
            <person name="Paulsen I."/>
            <person name="Penalva M.A."/>
            <person name="Pertea M."/>
            <person name="Price C."/>
            <person name="Pritchard B.L."/>
            <person name="Quail M.A."/>
            <person name="Rabbinowitsch E."/>
            <person name="Rawlins N."/>
            <person name="Rajandream M.A."/>
            <person name="Reichard U."/>
            <person name="Renauld H."/>
            <person name="Robson G.D."/>
            <person name="Rodriguez de Cordoba S."/>
            <person name="Rodriguez-Pena J.M."/>
            <person name="Ronning C.M."/>
            <person name="Rutter S."/>
            <person name="Salzberg S.L."/>
            <person name="Sanchez M."/>
            <person name="Sanchez-Ferrero J.C."/>
            <person name="Saunders D."/>
            <person name="Seeger K."/>
            <person name="Squares R."/>
            <person name="Squares S."/>
            <person name="Takeuchi M."/>
            <person name="Tekaia F."/>
            <person name="Turner G."/>
            <person name="Vazquez de Aldana C.R."/>
            <person name="Weidman J."/>
            <person name="White O."/>
            <person name="Woodward J.R."/>
            <person name="Yu J.-H."/>
            <person name="Fraser C.M."/>
            <person name="Galagan J.E."/>
            <person name="Asai K."/>
            <person name="Machida M."/>
            <person name="Hall N."/>
            <person name="Barrell B.G."/>
            <person name="Denning D.W."/>
        </authorList>
    </citation>
    <scope>NUCLEOTIDE SEQUENCE [LARGE SCALE GENOMIC DNA]</scope>
    <source>
        <strain>ATCC MYA-4609 / CBS 101355 / FGSC A1100 / Af293</strain>
    </source>
</reference>
<reference evidence="3" key="2">
    <citation type="journal article" date="1996" name="J. Med. Vet. Mycol.">
        <title>Increased cytochrome P-450 activity in Aspergillus fumigatus after xenobiotic exposure.</title>
        <authorList>
            <person name="Baillie G.S."/>
            <person name="Hitchcock C.A."/>
            <person name="Burnet F.R."/>
        </authorList>
    </citation>
    <scope>CATALYTIC ACTIVITY</scope>
    <scope>SUBCELLULAR LOCATION</scope>
</reference>
<feature type="chain" id="PRO_0000404329" description="NADPH--cytochrome P450 reductase">
    <location>
        <begin position="1"/>
        <end position="695"/>
    </location>
</feature>
<feature type="topological domain" description="Lumenal" evidence="1">
    <location>
        <begin position="1"/>
        <end position="8"/>
    </location>
</feature>
<feature type="transmembrane region" description="Helical" evidence="1">
    <location>
        <begin position="9"/>
        <end position="31"/>
    </location>
</feature>
<feature type="topological domain" description="Cytoplasmic" evidence="1">
    <location>
        <begin position="32"/>
        <end position="695"/>
    </location>
</feature>
<feature type="domain" description="Flavodoxin-like" evidence="1">
    <location>
        <begin position="66"/>
        <end position="221"/>
    </location>
</feature>
<feature type="domain" description="FAD-binding FR-type" evidence="1">
    <location>
        <begin position="277"/>
        <end position="538"/>
    </location>
</feature>
<feature type="binding site" evidence="1">
    <location>
        <begin position="72"/>
        <end position="77"/>
    </location>
    <ligand>
        <name>FMN</name>
        <dbReference type="ChEBI" id="CHEBI:58210"/>
    </ligand>
</feature>
<feature type="binding site" evidence="1">
    <location>
        <begin position="123"/>
        <end position="126"/>
    </location>
    <ligand>
        <name>FMN</name>
        <dbReference type="ChEBI" id="CHEBI:58210"/>
    </ligand>
</feature>
<feature type="binding site" evidence="1">
    <location>
        <begin position="169"/>
        <end position="178"/>
    </location>
    <ligand>
        <name>FMN</name>
        <dbReference type="ChEBI" id="CHEBI:58210"/>
    </ligand>
</feature>
<feature type="binding site" evidence="1">
    <location>
        <position position="204"/>
    </location>
    <ligand>
        <name>FMN</name>
        <dbReference type="ChEBI" id="CHEBI:58210"/>
    </ligand>
</feature>
<feature type="binding site" evidence="1">
    <location>
        <position position="296"/>
    </location>
    <ligand>
        <name>NADP(+)</name>
        <dbReference type="ChEBI" id="CHEBI:58349"/>
    </ligand>
</feature>
<feature type="binding site" evidence="1">
    <location>
        <begin position="451"/>
        <end position="454"/>
    </location>
    <ligand>
        <name>FAD</name>
        <dbReference type="ChEBI" id="CHEBI:57692"/>
    </ligand>
</feature>
<feature type="binding site" evidence="1">
    <location>
        <begin position="469"/>
        <end position="471"/>
    </location>
    <ligand>
        <name>FAD</name>
        <dbReference type="ChEBI" id="CHEBI:57692"/>
    </ligand>
</feature>
<feature type="binding site" evidence="1">
    <location>
        <begin position="486"/>
        <end position="489"/>
    </location>
    <ligand>
        <name>FAD</name>
        <dbReference type="ChEBI" id="CHEBI:57692"/>
    </ligand>
</feature>
<feature type="binding site" evidence="1">
    <location>
        <position position="552"/>
    </location>
    <ligand>
        <name>NADP(+)</name>
        <dbReference type="ChEBI" id="CHEBI:58349"/>
    </ligand>
</feature>
<feature type="binding site" evidence="1">
    <location>
        <begin position="614"/>
        <end position="615"/>
    </location>
    <ligand>
        <name>NADP(+)</name>
        <dbReference type="ChEBI" id="CHEBI:58349"/>
    </ligand>
</feature>
<feature type="binding site" evidence="1">
    <location>
        <begin position="620"/>
        <end position="624"/>
    </location>
    <ligand>
        <name>NADP(+)</name>
        <dbReference type="ChEBI" id="CHEBI:58349"/>
    </ligand>
</feature>
<feature type="binding site" evidence="1">
    <location>
        <position position="656"/>
    </location>
    <ligand>
        <name>NADP(+)</name>
        <dbReference type="ChEBI" id="CHEBI:58349"/>
    </ligand>
</feature>
<feature type="binding site" evidence="1">
    <location>
        <position position="694"/>
    </location>
    <ligand>
        <name>FAD</name>
        <dbReference type="ChEBI" id="CHEBI:57692"/>
    </ligand>
</feature>
<comment type="function">
    <text evidence="1">This enzyme is required for electron transfer from NADP to cytochrome P450 in microsomes. It can also provide electron transfer to heme oxygenase and cytochrome B5. Involved in ergosterol biosynthesis.</text>
</comment>
<comment type="catalytic activity">
    <reaction evidence="1 2">
        <text>2 oxidized [cytochrome P450] + NADPH = 2 reduced [cytochrome P450] + NADP(+) + H(+)</text>
        <dbReference type="Rhea" id="RHEA:24040"/>
        <dbReference type="Rhea" id="RHEA-COMP:14627"/>
        <dbReference type="Rhea" id="RHEA-COMP:14628"/>
        <dbReference type="ChEBI" id="CHEBI:15378"/>
        <dbReference type="ChEBI" id="CHEBI:55376"/>
        <dbReference type="ChEBI" id="CHEBI:57783"/>
        <dbReference type="ChEBI" id="CHEBI:58349"/>
        <dbReference type="ChEBI" id="CHEBI:60344"/>
        <dbReference type="EC" id="1.6.2.4"/>
    </reaction>
</comment>
<comment type="cofactor">
    <cofactor evidence="1">
        <name>FAD</name>
        <dbReference type="ChEBI" id="CHEBI:57692"/>
    </cofactor>
    <text evidence="1">Binds 1 FAD per monomer.</text>
</comment>
<comment type="cofactor">
    <cofactor evidence="1">
        <name>FMN</name>
        <dbReference type="ChEBI" id="CHEBI:58210"/>
    </cofactor>
    <text evidence="1">Binds 1 FMN per monomer.</text>
</comment>
<comment type="subcellular location">
    <subcellularLocation>
        <location evidence="1">Endoplasmic reticulum membrane</location>
        <topology evidence="1">Single-pass membrane protein</topology>
        <orientation evidence="1">Cytoplasmic side</orientation>
    </subcellularLocation>
    <subcellularLocation>
        <location evidence="1">Mitochondrion outer membrane</location>
        <topology evidence="1">Single-pass membrane protein</topology>
        <orientation evidence="1">Cytoplasmic side</orientation>
    </subcellularLocation>
    <subcellularLocation>
        <location evidence="1">Cell membrane</location>
        <topology evidence="1">Single-pass membrane protein</topology>
        <orientation evidence="1">Cytoplasmic side</orientation>
    </subcellularLocation>
</comment>
<comment type="similarity">
    <text evidence="1">Belongs to the NADPH--cytochrome P450 reductase family.</text>
</comment>
<comment type="similarity">
    <text evidence="1">In the N-terminal section; belongs to the flavodoxin family.</text>
</comment>
<comment type="similarity">
    <text evidence="1">In the C-terminal section; belongs to the flavoprotein pyridine nucleotide cytochrome reductase family.</text>
</comment>
<name>NCPR_ASPFU</name>